<comment type="function">
    <text evidence="1">Catalyzes oxygen-dependent 5-hydroxyuridine (ho5U) modification at position 34 in tRNAs.</text>
</comment>
<comment type="catalytic activity">
    <reaction evidence="1">
        <text>uridine(34) in tRNA + AH2 + O2 = 5-hydroxyuridine(34) in tRNA + A + H2O</text>
        <dbReference type="Rhea" id="RHEA:64224"/>
        <dbReference type="Rhea" id="RHEA-COMP:11727"/>
        <dbReference type="Rhea" id="RHEA-COMP:13381"/>
        <dbReference type="ChEBI" id="CHEBI:13193"/>
        <dbReference type="ChEBI" id="CHEBI:15377"/>
        <dbReference type="ChEBI" id="CHEBI:15379"/>
        <dbReference type="ChEBI" id="CHEBI:17499"/>
        <dbReference type="ChEBI" id="CHEBI:65315"/>
        <dbReference type="ChEBI" id="CHEBI:136877"/>
    </reaction>
</comment>
<comment type="similarity">
    <text evidence="1">Belongs to the TrhO family.</text>
</comment>
<protein>
    <recommendedName>
        <fullName evidence="1">tRNA uridine(34) hydroxylase</fullName>
        <ecNumber evidence="1">1.14.-.-</ecNumber>
    </recommendedName>
    <alternativeName>
        <fullName evidence="1">tRNA hydroxylation protein O</fullName>
    </alternativeName>
</protein>
<reference key="1">
    <citation type="journal article" date="2005" name="J. Bacteriol.">
        <title>Insights on evolution of virulence and resistance from the complete genome analysis of an early methicillin-resistant Staphylococcus aureus strain and a biofilm-producing methicillin-resistant Staphylococcus epidermidis strain.</title>
        <authorList>
            <person name="Gill S.R."/>
            <person name="Fouts D.E."/>
            <person name="Archer G.L."/>
            <person name="Mongodin E.F."/>
            <person name="DeBoy R.T."/>
            <person name="Ravel J."/>
            <person name="Paulsen I.T."/>
            <person name="Kolonay J.F."/>
            <person name="Brinkac L.M."/>
            <person name="Beanan M.J."/>
            <person name="Dodson R.J."/>
            <person name="Daugherty S.C."/>
            <person name="Madupu R."/>
            <person name="Angiuoli S.V."/>
            <person name="Durkin A.S."/>
            <person name="Haft D.H."/>
            <person name="Vamathevan J.J."/>
            <person name="Khouri H."/>
            <person name="Utterback T.R."/>
            <person name="Lee C."/>
            <person name="Dimitrov G."/>
            <person name="Jiang L."/>
            <person name="Qin H."/>
            <person name="Weidman J."/>
            <person name="Tran K."/>
            <person name="Kang K.H."/>
            <person name="Hance I.R."/>
            <person name="Nelson K.E."/>
            <person name="Fraser C.M."/>
        </authorList>
    </citation>
    <scope>NUCLEOTIDE SEQUENCE [LARGE SCALE GENOMIC DNA]</scope>
    <source>
        <strain>ATCC 35984 / DSM 28319 / BCRC 17069 / CCUG 31568 / BM 3577 / RP62A</strain>
    </source>
</reference>
<keyword id="KW-0560">Oxidoreductase</keyword>
<keyword id="KW-1185">Reference proteome</keyword>
<keyword id="KW-0819">tRNA processing</keyword>
<feature type="chain" id="PRO_0000161520" description="tRNA uridine(34) hydroxylase">
    <location>
        <begin position="1"/>
        <end position="320"/>
    </location>
</feature>
<feature type="domain" description="Rhodanese" evidence="1">
    <location>
        <begin position="123"/>
        <end position="217"/>
    </location>
</feature>
<feature type="active site" description="Cysteine persulfide intermediate" evidence="1">
    <location>
        <position position="177"/>
    </location>
</feature>
<dbReference type="EC" id="1.14.-.-" evidence="1"/>
<dbReference type="EMBL" id="CP000029">
    <property type="protein sequence ID" value="AAW53226.1"/>
    <property type="molecule type" value="Genomic_DNA"/>
</dbReference>
<dbReference type="RefSeq" id="WP_002469248.1">
    <property type="nucleotide sequence ID" value="NC_002976.3"/>
</dbReference>
<dbReference type="SMR" id="Q5HKM8"/>
<dbReference type="STRING" id="176279.SERP2316"/>
<dbReference type="KEGG" id="ser:SERP2316"/>
<dbReference type="eggNOG" id="COG1054">
    <property type="taxonomic scope" value="Bacteria"/>
</dbReference>
<dbReference type="HOGENOM" id="CLU_038878_1_0_9"/>
<dbReference type="Proteomes" id="UP000000531">
    <property type="component" value="Chromosome"/>
</dbReference>
<dbReference type="GO" id="GO:0016705">
    <property type="term" value="F:oxidoreductase activity, acting on paired donors, with incorporation or reduction of molecular oxygen"/>
    <property type="evidence" value="ECO:0007669"/>
    <property type="project" value="UniProtKB-UniRule"/>
</dbReference>
<dbReference type="GO" id="GO:0006400">
    <property type="term" value="P:tRNA modification"/>
    <property type="evidence" value="ECO:0007669"/>
    <property type="project" value="UniProtKB-UniRule"/>
</dbReference>
<dbReference type="CDD" id="cd01518">
    <property type="entry name" value="RHOD_YceA"/>
    <property type="match status" value="1"/>
</dbReference>
<dbReference type="Gene3D" id="3.30.70.100">
    <property type="match status" value="1"/>
</dbReference>
<dbReference type="Gene3D" id="3.40.250.10">
    <property type="entry name" value="Rhodanese-like domain"/>
    <property type="match status" value="1"/>
</dbReference>
<dbReference type="HAMAP" id="MF_00469">
    <property type="entry name" value="TrhO"/>
    <property type="match status" value="1"/>
</dbReference>
<dbReference type="InterPro" id="IPR001763">
    <property type="entry name" value="Rhodanese-like_dom"/>
</dbReference>
<dbReference type="InterPro" id="IPR036873">
    <property type="entry name" value="Rhodanese-like_dom_sf"/>
</dbReference>
<dbReference type="InterPro" id="IPR022111">
    <property type="entry name" value="Rhodanese_C"/>
</dbReference>
<dbReference type="InterPro" id="IPR020936">
    <property type="entry name" value="TrhO"/>
</dbReference>
<dbReference type="InterPro" id="IPR040503">
    <property type="entry name" value="TRHO_N"/>
</dbReference>
<dbReference type="NCBIfam" id="NF001135">
    <property type="entry name" value="PRK00142.1-3"/>
    <property type="match status" value="1"/>
</dbReference>
<dbReference type="PANTHER" id="PTHR43268:SF3">
    <property type="entry name" value="RHODANESE-LIKE DOMAIN-CONTAINING PROTEIN 7-RELATED"/>
    <property type="match status" value="1"/>
</dbReference>
<dbReference type="PANTHER" id="PTHR43268">
    <property type="entry name" value="THIOSULFATE SULFURTRANSFERASE/RHODANESE-LIKE DOMAIN-CONTAINING PROTEIN 2"/>
    <property type="match status" value="1"/>
</dbReference>
<dbReference type="Pfam" id="PF00581">
    <property type="entry name" value="Rhodanese"/>
    <property type="match status" value="1"/>
</dbReference>
<dbReference type="Pfam" id="PF12368">
    <property type="entry name" value="Rhodanese_C"/>
    <property type="match status" value="1"/>
</dbReference>
<dbReference type="Pfam" id="PF17773">
    <property type="entry name" value="UPF0176_N"/>
    <property type="match status" value="1"/>
</dbReference>
<dbReference type="SMART" id="SM00450">
    <property type="entry name" value="RHOD"/>
    <property type="match status" value="1"/>
</dbReference>
<dbReference type="SUPFAM" id="SSF52821">
    <property type="entry name" value="Rhodanese/Cell cycle control phosphatase"/>
    <property type="match status" value="1"/>
</dbReference>
<dbReference type="PROSITE" id="PS50206">
    <property type="entry name" value="RHODANESE_3"/>
    <property type="match status" value="1"/>
</dbReference>
<sequence length="320" mass="37368">MDYRVLLYYKYVTIDDPETFAAEHLKFCKEHHLKGRILVSTEGINGTLSGTKEDTDKYIEHMHADSRFADLTFKIDEAESHAFKKMHVRPRREIVALDLEEDINPREITGKYYSPKEFKAALEDENTVILDARNDYEYDLGHFRGAIRPDITRFRDLPEWVRNNKEQLDGKNIVTYCTGGIRCEKFSGWLVKEGFENVGQLHGGIATYGKDPETKGLYWDGKMYVFDERISVDVNQIDKTVIGKEHFDGTPCERYINCANPECNKQILVSEENEEKYLGACSYDCAKHERNRYVARHHISNEEWQRRLNNFKDVPEHTHA</sequence>
<proteinExistence type="inferred from homology"/>
<evidence type="ECO:0000255" key="1">
    <source>
        <dbReference type="HAMAP-Rule" id="MF_00469"/>
    </source>
</evidence>
<gene>
    <name evidence="1" type="primary">trhO</name>
    <name type="ordered locus">SERP2316</name>
</gene>
<organism>
    <name type="scientific">Staphylococcus epidermidis (strain ATCC 35984 / DSM 28319 / BCRC 17069 / CCUG 31568 / BM 3577 / RP62A)</name>
    <dbReference type="NCBI Taxonomy" id="176279"/>
    <lineage>
        <taxon>Bacteria</taxon>
        <taxon>Bacillati</taxon>
        <taxon>Bacillota</taxon>
        <taxon>Bacilli</taxon>
        <taxon>Bacillales</taxon>
        <taxon>Staphylococcaceae</taxon>
        <taxon>Staphylococcus</taxon>
    </lineage>
</organism>
<name>TRHO_STAEQ</name>
<accession>Q5HKM8</accession>